<dbReference type="EC" id="5.1.1.3" evidence="1"/>
<dbReference type="EMBL" id="BX897699">
    <property type="protein sequence ID" value="CAF27637.1"/>
    <property type="molecule type" value="Genomic_DNA"/>
</dbReference>
<dbReference type="RefSeq" id="WP_011180733.1">
    <property type="nucleotide sequence ID" value="NZ_LRIJ02000001.1"/>
</dbReference>
<dbReference type="SMR" id="Q6G3D5"/>
<dbReference type="PaxDb" id="283166-BH08380"/>
<dbReference type="EnsemblBacteria" id="CAF27637">
    <property type="protein sequence ID" value="CAF27637"/>
    <property type="gene ID" value="BH08380"/>
</dbReference>
<dbReference type="GeneID" id="92985498"/>
<dbReference type="KEGG" id="bhe:BH08380"/>
<dbReference type="eggNOG" id="COG0796">
    <property type="taxonomic scope" value="Bacteria"/>
</dbReference>
<dbReference type="OrthoDB" id="9801055at2"/>
<dbReference type="UniPathway" id="UPA00219"/>
<dbReference type="Proteomes" id="UP000000421">
    <property type="component" value="Chromosome"/>
</dbReference>
<dbReference type="GO" id="GO:0008881">
    <property type="term" value="F:glutamate racemase activity"/>
    <property type="evidence" value="ECO:0007669"/>
    <property type="project" value="UniProtKB-UniRule"/>
</dbReference>
<dbReference type="GO" id="GO:0071555">
    <property type="term" value="P:cell wall organization"/>
    <property type="evidence" value="ECO:0007669"/>
    <property type="project" value="UniProtKB-KW"/>
</dbReference>
<dbReference type="GO" id="GO:0009252">
    <property type="term" value="P:peptidoglycan biosynthetic process"/>
    <property type="evidence" value="ECO:0007669"/>
    <property type="project" value="UniProtKB-UniRule"/>
</dbReference>
<dbReference type="GO" id="GO:0008360">
    <property type="term" value="P:regulation of cell shape"/>
    <property type="evidence" value="ECO:0007669"/>
    <property type="project" value="UniProtKB-KW"/>
</dbReference>
<dbReference type="Gene3D" id="3.40.50.1860">
    <property type="match status" value="2"/>
</dbReference>
<dbReference type="HAMAP" id="MF_00258">
    <property type="entry name" value="Glu_racemase"/>
    <property type="match status" value="1"/>
</dbReference>
<dbReference type="InterPro" id="IPR015942">
    <property type="entry name" value="Asp/Glu/hydantoin_racemase"/>
</dbReference>
<dbReference type="InterPro" id="IPR001920">
    <property type="entry name" value="Asp/Glu_race"/>
</dbReference>
<dbReference type="InterPro" id="IPR033134">
    <property type="entry name" value="Asp/Glu_racemase_AS_2"/>
</dbReference>
<dbReference type="InterPro" id="IPR004391">
    <property type="entry name" value="Glu_race"/>
</dbReference>
<dbReference type="NCBIfam" id="TIGR00067">
    <property type="entry name" value="glut_race"/>
    <property type="match status" value="1"/>
</dbReference>
<dbReference type="PANTHER" id="PTHR21198">
    <property type="entry name" value="GLUTAMATE RACEMASE"/>
    <property type="match status" value="1"/>
</dbReference>
<dbReference type="PANTHER" id="PTHR21198:SF2">
    <property type="entry name" value="GLUTAMATE RACEMASE"/>
    <property type="match status" value="1"/>
</dbReference>
<dbReference type="Pfam" id="PF01177">
    <property type="entry name" value="Asp_Glu_race"/>
    <property type="match status" value="1"/>
</dbReference>
<dbReference type="SUPFAM" id="SSF53681">
    <property type="entry name" value="Aspartate/glutamate racemase"/>
    <property type="match status" value="2"/>
</dbReference>
<dbReference type="PROSITE" id="PS00924">
    <property type="entry name" value="ASP_GLU_RACEMASE_2"/>
    <property type="match status" value="1"/>
</dbReference>
<feature type="chain" id="PRO_1000047546" description="Glutamate racemase">
    <location>
        <begin position="1"/>
        <end position="270"/>
    </location>
</feature>
<feature type="active site" description="Proton donor/acceptor" evidence="1">
    <location>
        <position position="74"/>
    </location>
</feature>
<feature type="active site" description="Proton donor/acceptor" evidence="1">
    <location>
        <position position="189"/>
    </location>
</feature>
<feature type="binding site" evidence="1">
    <location>
        <begin position="10"/>
        <end position="11"/>
    </location>
    <ligand>
        <name>substrate</name>
    </ligand>
</feature>
<feature type="binding site" evidence="1">
    <location>
        <begin position="42"/>
        <end position="43"/>
    </location>
    <ligand>
        <name>substrate</name>
    </ligand>
</feature>
<feature type="binding site" evidence="1">
    <location>
        <begin position="75"/>
        <end position="76"/>
    </location>
    <ligand>
        <name>substrate</name>
    </ligand>
</feature>
<feature type="binding site" evidence="1">
    <location>
        <begin position="190"/>
        <end position="191"/>
    </location>
    <ligand>
        <name>substrate</name>
    </ligand>
</feature>
<evidence type="ECO:0000255" key="1">
    <source>
        <dbReference type="HAMAP-Rule" id="MF_00258"/>
    </source>
</evidence>
<name>MURI_BARHE</name>
<reference key="1">
    <citation type="journal article" date="2004" name="Proc. Natl. Acad. Sci. U.S.A.">
        <title>The louse-borne human pathogen Bartonella quintana is a genomic derivative of the zoonotic agent Bartonella henselae.</title>
        <authorList>
            <person name="Alsmark U.C.M."/>
            <person name="Frank A.C."/>
            <person name="Karlberg E.O."/>
            <person name="Legault B.-A."/>
            <person name="Ardell D.H."/>
            <person name="Canbaeck B."/>
            <person name="Eriksson A.-S."/>
            <person name="Naeslund A.K."/>
            <person name="Handley S.A."/>
            <person name="Huvet M."/>
            <person name="La Scola B."/>
            <person name="Holmberg M."/>
            <person name="Andersson S.G.E."/>
        </authorList>
    </citation>
    <scope>NUCLEOTIDE SEQUENCE [LARGE SCALE GENOMIC DNA]</scope>
    <source>
        <strain>ATCC 49882 / DSM 28221 / CCUG 30454 / Houston 1</strain>
    </source>
</reference>
<proteinExistence type="inferred from homology"/>
<gene>
    <name evidence="1" type="primary">murI</name>
    <name type="ordered locus">BH08380</name>
</gene>
<keyword id="KW-0133">Cell shape</keyword>
<keyword id="KW-0961">Cell wall biogenesis/degradation</keyword>
<keyword id="KW-0413">Isomerase</keyword>
<keyword id="KW-0573">Peptidoglycan synthesis</keyword>
<accession>Q6G3D5</accession>
<protein>
    <recommendedName>
        <fullName evidence="1">Glutamate racemase</fullName>
        <ecNumber evidence="1">5.1.1.3</ecNumber>
    </recommendedName>
</protein>
<sequence>MDERPVLFFDSGIGGLTVLREVRSLIPEKQFIYVADDVGFPYGNWEENVLKNRILKIFTNLLTVYNPALCVIACNTVSTLMIADLRERFPHILFVGTVPAIKLAAEQTKSGFISVLATPGTVKRTYTHELINSFAGQCHVQLVGSEKLAGFAENYLRGQSVDLEELRNEILPCFVKKNGKHTDIIVLACTHYPFLLHFFREQALWHVQWIDPSKAIAKRTRSLLPQRIHHQTVKKYEDFALFTSQNITSSTKRLLKEFSLNITKGVDFKV</sequence>
<comment type="function">
    <text evidence="1">Provides the (R)-glutamate required for cell wall biosynthesis.</text>
</comment>
<comment type="catalytic activity">
    <reaction evidence="1">
        <text>L-glutamate = D-glutamate</text>
        <dbReference type="Rhea" id="RHEA:12813"/>
        <dbReference type="ChEBI" id="CHEBI:29985"/>
        <dbReference type="ChEBI" id="CHEBI:29986"/>
        <dbReference type="EC" id="5.1.1.3"/>
    </reaction>
</comment>
<comment type="pathway">
    <text evidence="1">Cell wall biogenesis; peptidoglycan biosynthesis.</text>
</comment>
<comment type="similarity">
    <text evidence="1">Belongs to the aspartate/glutamate racemases family.</text>
</comment>
<organism>
    <name type="scientific">Bartonella henselae (strain ATCC 49882 / DSM 28221 / CCUG 30454 / Houston 1)</name>
    <name type="common">Rochalimaea henselae</name>
    <dbReference type="NCBI Taxonomy" id="283166"/>
    <lineage>
        <taxon>Bacteria</taxon>
        <taxon>Pseudomonadati</taxon>
        <taxon>Pseudomonadota</taxon>
        <taxon>Alphaproteobacteria</taxon>
        <taxon>Hyphomicrobiales</taxon>
        <taxon>Bartonellaceae</taxon>
        <taxon>Bartonella</taxon>
    </lineage>
</organism>